<keyword id="KW-0560">Oxidoreductase</keyword>
<name>MSRB_BACVZ</name>
<protein>
    <recommendedName>
        <fullName evidence="1">Peptide methionine sulfoxide reductase MsrB</fullName>
        <ecNumber evidence="1">1.8.4.12</ecNumber>
    </recommendedName>
    <alternativeName>
        <fullName evidence="1">Peptide-methionine (R)-S-oxide reductase</fullName>
    </alternativeName>
</protein>
<gene>
    <name evidence="1" type="primary">msrB</name>
    <name type="ordered locus">RBAM_019850</name>
</gene>
<feature type="chain" id="PRO_1000068263" description="Peptide methionine sulfoxide reductase MsrB">
    <location>
        <begin position="1"/>
        <end position="144"/>
    </location>
</feature>
<feature type="domain" description="MsrB" evidence="2">
    <location>
        <begin position="5"/>
        <end position="127"/>
    </location>
</feature>
<feature type="active site" description="Nucleophile" evidence="2">
    <location>
        <position position="116"/>
    </location>
</feature>
<accession>A7Z5S1</accession>
<evidence type="ECO:0000255" key="1">
    <source>
        <dbReference type="HAMAP-Rule" id="MF_01400"/>
    </source>
</evidence>
<evidence type="ECO:0000255" key="2">
    <source>
        <dbReference type="PROSITE-ProRule" id="PRU01126"/>
    </source>
</evidence>
<reference key="1">
    <citation type="journal article" date="2007" name="Nat. Biotechnol.">
        <title>Comparative analysis of the complete genome sequence of the plant growth-promoting bacterium Bacillus amyloliquefaciens FZB42.</title>
        <authorList>
            <person name="Chen X.H."/>
            <person name="Koumoutsi A."/>
            <person name="Scholz R."/>
            <person name="Eisenreich A."/>
            <person name="Schneider K."/>
            <person name="Heinemeyer I."/>
            <person name="Morgenstern B."/>
            <person name="Voss B."/>
            <person name="Hess W.R."/>
            <person name="Reva O."/>
            <person name="Junge H."/>
            <person name="Voigt B."/>
            <person name="Jungblut P.R."/>
            <person name="Vater J."/>
            <person name="Suessmuth R."/>
            <person name="Liesegang H."/>
            <person name="Strittmatter A."/>
            <person name="Gottschalk G."/>
            <person name="Borriss R."/>
        </authorList>
    </citation>
    <scope>NUCLEOTIDE SEQUENCE [LARGE SCALE GENOMIC DNA]</scope>
    <source>
        <strain>DSM 23117 / BGSC 10A6 / LMG 26770 / FZB42</strain>
    </source>
</reference>
<sequence>MAFNKEEKIKSLNRMQYEVTQNNGTEPPFQNEFWDHKEEGLYVDIVSGKPLFTSLDKFDSHCGWPSFTKPIEEEEVDEKLDTSHGMIRTEVRSKTADSHLGHVFNDGPGPSGLRYCINSAALRFIPKDKLKEEGYEACLHLFEK</sequence>
<organism>
    <name type="scientific">Bacillus velezensis (strain DSM 23117 / BGSC 10A6 / LMG 26770 / FZB42)</name>
    <name type="common">Bacillus amyloliquefaciens subsp. plantarum</name>
    <dbReference type="NCBI Taxonomy" id="326423"/>
    <lineage>
        <taxon>Bacteria</taxon>
        <taxon>Bacillati</taxon>
        <taxon>Bacillota</taxon>
        <taxon>Bacilli</taxon>
        <taxon>Bacillales</taxon>
        <taxon>Bacillaceae</taxon>
        <taxon>Bacillus</taxon>
        <taxon>Bacillus amyloliquefaciens group</taxon>
    </lineage>
</organism>
<comment type="catalytic activity">
    <reaction evidence="1">
        <text>L-methionyl-[protein] + [thioredoxin]-disulfide + H2O = L-methionyl-(R)-S-oxide-[protein] + [thioredoxin]-dithiol</text>
        <dbReference type="Rhea" id="RHEA:24164"/>
        <dbReference type="Rhea" id="RHEA-COMP:10698"/>
        <dbReference type="Rhea" id="RHEA-COMP:10700"/>
        <dbReference type="Rhea" id="RHEA-COMP:12313"/>
        <dbReference type="Rhea" id="RHEA-COMP:12314"/>
        <dbReference type="ChEBI" id="CHEBI:15377"/>
        <dbReference type="ChEBI" id="CHEBI:16044"/>
        <dbReference type="ChEBI" id="CHEBI:29950"/>
        <dbReference type="ChEBI" id="CHEBI:45764"/>
        <dbReference type="ChEBI" id="CHEBI:50058"/>
        <dbReference type="EC" id="1.8.4.12"/>
    </reaction>
</comment>
<comment type="similarity">
    <text evidence="1">Belongs to the MsrB Met sulfoxide reductase family.</text>
</comment>
<proteinExistence type="inferred from homology"/>
<dbReference type="EC" id="1.8.4.12" evidence="1"/>
<dbReference type="EMBL" id="CP000560">
    <property type="protein sequence ID" value="ABS74347.1"/>
    <property type="molecule type" value="Genomic_DNA"/>
</dbReference>
<dbReference type="RefSeq" id="WP_007409536.1">
    <property type="nucleotide sequence ID" value="NC_009725.2"/>
</dbReference>
<dbReference type="SMR" id="A7Z5S1"/>
<dbReference type="GeneID" id="93081114"/>
<dbReference type="KEGG" id="bay:RBAM_019850"/>
<dbReference type="HOGENOM" id="CLU_031040_8_5_9"/>
<dbReference type="Proteomes" id="UP000001120">
    <property type="component" value="Chromosome"/>
</dbReference>
<dbReference type="GO" id="GO:0005737">
    <property type="term" value="C:cytoplasm"/>
    <property type="evidence" value="ECO:0007669"/>
    <property type="project" value="TreeGrafter"/>
</dbReference>
<dbReference type="GO" id="GO:0033743">
    <property type="term" value="F:peptide-methionine (R)-S-oxide reductase activity"/>
    <property type="evidence" value="ECO:0007669"/>
    <property type="project" value="UniProtKB-UniRule"/>
</dbReference>
<dbReference type="GO" id="GO:0030091">
    <property type="term" value="P:protein repair"/>
    <property type="evidence" value="ECO:0007669"/>
    <property type="project" value="InterPro"/>
</dbReference>
<dbReference type="GO" id="GO:0006979">
    <property type="term" value="P:response to oxidative stress"/>
    <property type="evidence" value="ECO:0007669"/>
    <property type="project" value="InterPro"/>
</dbReference>
<dbReference type="FunFam" id="2.170.150.20:FF:000003">
    <property type="entry name" value="Peptide methionine sulfoxide reductase MsrB"/>
    <property type="match status" value="1"/>
</dbReference>
<dbReference type="Gene3D" id="2.170.150.20">
    <property type="entry name" value="Peptide methionine sulfoxide reductase"/>
    <property type="match status" value="1"/>
</dbReference>
<dbReference type="HAMAP" id="MF_01400">
    <property type="entry name" value="MsrB"/>
    <property type="match status" value="1"/>
</dbReference>
<dbReference type="InterPro" id="IPR028427">
    <property type="entry name" value="Met_Sox_Rdtase_MsrB"/>
</dbReference>
<dbReference type="InterPro" id="IPR002579">
    <property type="entry name" value="Met_Sox_Rdtase_MsrB_dom"/>
</dbReference>
<dbReference type="InterPro" id="IPR011057">
    <property type="entry name" value="Mss4-like_sf"/>
</dbReference>
<dbReference type="NCBIfam" id="TIGR00357">
    <property type="entry name" value="peptide-methionine (R)-S-oxide reductase MsrB"/>
    <property type="match status" value="1"/>
</dbReference>
<dbReference type="PANTHER" id="PTHR10173">
    <property type="entry name" value="METHIONINE SULFOXIDE REDUCTASE"/>
    <property type="match status" value="1"/>
</dbReference>
<dbReference type="PANTHER" id="PTHR10173:SF59">
    <property type="entry name" value="PEPTIDE METHIONINE SULFOXIDE REDUCTASE MSRA_MSRB"/>
    <property type="match status" value="1"/>
</dbReference>
<dbReference type="Pfam" id="PF01641">
    <property type="entry name" value="SelR"/>
    <property type="match status" value="1"/>
</dbReference>
<dbReference type="SUPFAM" id="SSF51316">
    <property type="entry name" value="Mss4-like"/>
    <property type="match status" value="1"/>
</dbReference>
<dbReference type="PROSITE" id="PS51790">
    <property type="entry name" value="MSRB"/>
    <property type="match status" value="1"/>
</dbReference>